<protein>
    <recommendedName>
        <fullName evidence="2">Translation initiation factor IF-2</fullName>
    </recommendedName>
</protein>
<name>IF2_OCEIH</name>
<accession>Q8EQU1</accession>
<comment type="function">
    <text evidence="2">One of the essential components for the initiation of protein synthesis. Protects formylmethionyl-tRNA from spontaneous hydrolysis and promotes its binding to the 30S ribosomal subunits. Also involved in the hydrolysis of GTP during the formation of the 70S ribosomal complex.</text>
</comment>
<comment type="subcellular location">
    <subcellularLocation>
        <location evidence="2">Cytoplasm</location>
    </subcellularLocation>
</comment>
<comment type="similarity">
    <text evidence="2">Belongs to the TRAFAC class translation factor GTPase superfamily. Classic translation factor GTPase family. IF-2 subfamily.</text>
</comment>
<reference key="1">
    <citation type="journal article" date="2002" name="Nucleic Acids Res.">
        <title>Genome sequence of Oceanobacillus iheyensis isolated from the Iheya Ridge and its unexpected adaptive capabilities to extreme environments.</title>
        <authorList>
            <person name="Takami H."/>
            <person name="Takaki Y."/>
            <person name="Uchiyama I."/>
        </authorList>
    </citation>
    <scope>NUCLEOTIDE SEQUENCE [LARGE SCALE GENOMIC DNA]</scope>
    <source>
        <strain>DSM 14371 / CIP 107618 / JCM 11309 / KCTC 3954 / HTE831</strain>
    </source>
</reference>
<proteinExistence type="inferred from homology"/>
<feature type="chain" id="PRO_0000137229" description="Translation initiation factor IF-2">
    <location>
        <begin position="1"/>
        <end position="692"/>
    </location>
</feature>
<feature type="domain" description="tr-type G">
    <location>
        <begin position="193"/>
        <end position="362"/>
    </location>
</feature>
<feature type="region of interest" description="Disordered" evidence="3">
    <location>
        <begin position="51"/>
        <end position="114"/>
    </location>
</feature>
<feature type="region of interest" description="G1" evidence="1">
    <location>
        <begin position="202"/>
        <end position="209"/>
    </location>
</feature>
<feature type="region of interest" description="G2" evidence="1">
    <location>
        <begin position="227"/>
        <end position="231"/>
    </location>
</feature>
<feature type="region of interest" description="G3" evidence="1">
    <location>
        <begin position="248"/>
        <end position="251"/>
    </location>
</feature>
<feature type="region of interest" description="G4" evidence="1">
    <location>
        <begin position="302"/>
        <end position="305"/>
    </location>
</feature>
<feature type="region of interest" description="G5" evidence="1">
    <location>
        <begin position="338"/>
        <end position="340"/>
    </location>
</feature>
<feature type="compositionally biased region" description="Low complexity" evidence="3">
    <location>
        <begin position="59"/>
        <end position="84"/>
    </location>
</feature>
<feature type="compositionally biased region" description="Basic residues" evidence="3">
    <location>
        <begin position="85"/>
        <end position="94"/>
    </location>
</feature>
<feature type="binding site" evidence="2">
    <location>
        <begin position="202"/>
        <end position="209"/>
    </location>
    <ligand>
        <name>GTP</name>
        <dbReference type="ChEBI" id="CHEBI:37565"/>
    </ligand>
</feature>
<feature type="binding site" evidence="2">
    <location>
        <begin position="248"/>
        <end position="252"/>
    </location>
    <ligand>
        <name>GTP</name>
        <dbReference type="ChEBI" id="CHEBI:37565"/>
    </ligand>
</feature>
<feature type="binding site" evidence="2">
    <location>
        <begin position="302"/>
        <end position="305"/>
    </location>
    <ligand>
        <name>GTP</name>
        <dbReference type="ChEBI" id="CHEBI:37565"/>
    </ligand>
</feature>
<gene>
    <name evidence="2" type="primary">infB</name>
    <name type="ordered locus">OB1598</name>
</gene>
<dbReference type="EMBL" id="BA000028">
    <property type="protein sequence ID" value="BAC13554.1"/>
    <property type="molecule type" value="Genomic_DNA"/>
</dbReference>
<dbReference type="RefSeq" id="WP_011065998.1">
    <property type="nucleotide sequence ID" value="NC_004193.1"/>
</dbReference>
<dbReference type="SMR" id="Q8EQU1"/>
<dbReference type="STRING" id="221109.gene:10733838"/>
<dbReference type="KEGG" id="oih:OB1598"/>
<dbReference type="eggNOG" id="COG0532">
    <property type="taxonomic scope" value="Bacteria"/>
</dbReference>
<dbReference type="HOGENOM" id="CLU_006301_5_1_9"/>
<dbReference type="OrthoDB" id="9811804at2"/>
<dbReference type="PhylomeDB" id="Q8EQU1"/>
<dbReference type="Proteomes" id="UP000000822">
    <property type="component" value="Chromosome"/>
</dbReference>
<dbReference type="GO" id="GO:0005829">
    <property type="term" value="C:cytosol"/>
    <property type="evidence" value="ECO:0007669"/>
    <property type="project" value="TreeGrafter"/>
</dbReference>
<dbReference type="GO" id="GO:0005525">
    <property type="term" value="F:GTP binding"/>
    <property type="evidence" value="ECO:0007669"/>
    <property type="project" value="UniProtKB-KW"/>
</dbReference>
<dbReference type="GO" id="GO:0003924">
    <property type="term" value="F:GTPase activity"/>
    <property type="evidence" value="ECO:0007669"/>
    <property type="project" value="UniProtKB-UniRule"/>
</dbReference>
<dbReference type="GO" id="GO:0003743">
    <property type="term" value="F:translation initiation factor activity"/>
    <property type="evidence" value="ECO:0007669"/>
    <property type="project" value="UniProtKB-UniRule"/>
</dbReference>
<dbReference type="CDD" id="cd01887">
    <property type="entry name" value="IF2_eIF5B"/>
    <property type="match status" value="1"/>
</dbReference>
<dbReference type="CDD" id="cd03702">
    <property type="entry name" value="IF2_mtIF2_II"/>
    <property type="match status" value="1"/>
</dbReference>
<dbReference type="CDD" id="cd03692">
    <property type="entry name" value="mtIF2_IVc"/>
    <property type="match status" value="1"/>
</dbReference>
<dbReference type="FunFam" id="2.40.30.10:FF:000007">
    <property type="entry name" value="Translation initiation factor IF-2"/>
    <property type="match status" value="1"/>
</dbReference>
<dbReference type="FunFam" id="2.40.30.10:FF:000008">
    <property type="entry name" value="Translation initiation factor IF-2"/>
    <property type="match status" value="1"/>
</dbReference>
<dbReference type="FunFam" id="3.40.50.10050:FF:000001">
    <property type="entry name" value="Translation initiation factor IF-2"/>
    <property type="match status" value="1"/>
</dbReference>
<dbReference type="FunFam" id="3.40.50.300:FF:000019">
    <property type="entry name" value="Translation initiation factor IF-2"/>
    <property type="match status" value="1"/>
</dbReference>
<dbReference type="Gene3D" id="1.10.10.2480">
    <property type="match status" value="1"/>
</dbReference>
<dbReference type="Gene3D" id="3.40.50.300">
    <property type="entry name" value="P-loop containing nucleotide triphosphate hydrolases"/>
    <property type="match status" value="1"/>
</dbReference>
<dbReference type="Gene3D" id="2.40.30.10">
    <property type="entry name" value="Translation factors"/>
    <property type="match status" value="2"/>
</dbReference>
<dbReference type="Gene3D" id="3.40.50.10050">
    <property type="entry name" value="Translation initiation factor IF- 2, domain 3"/>
    <property type="match status" value="1"/>
</dbReference>
<dbReference type="HAMAP" id="MF_00100_B">
    <property type="entry name" value="IF_2_B"/>
    <property type="match status" value="1"/>
</dbReference>
<dbReference type="InterPro" id="IPR053905">
    <property type="entry name" value="EF-G-like_DII"/>
</dbReference>
<dbReference type="InterPro" id="IPR044145">
    <property type="entry name" value="IF2_II"/>
</dbReference>
<dbReference type="InterPro" id="IPR006847">
    <property type="entry name" value="IF2_N"/>
</dbReference>
<dbReference type="InterPro" id="IPR027417">
    <property type="entry name" value="P-loop_NTPase"/>
</dbReference>
<dbReference type="InterPro" id="IPR005225">
    <property type="entry name" value="Small_GTP-bd"/>
</dbReference>
<dbReference type="InterPro" id="IPR000795">
    <property type="entry name" value="T_Tr_GTP-bd_dom"/>
</dbReference>
<dbReference type="InterPro" id="IPR000178">
    <property type="entry name" value="TF_IF2_bacterial-like"/>
</dbReference>
<dbReference type="InterPro" id="IPR015760">
    <property type="entry name" value="TIF_IF2"/>
</dbReference>
<dbReference type="InterPro" id="IPR023115">
    <property type="entry name" value="TIF_IF2_dom3"/>
</dbReference>
<dbReference type="InterPro" id="IPR036925">
    <property type="entry name" value="TIF_IF2_dom3_sf"/>
</dbReference>
<dbReference type="InterPro" id="IPR009000">
    <property type="entry name" value="Transl_B-barrel_sf"/>
</dbReference>
<dbReference type="NCBIfam" id="TIGR00487">
    <property type="entry name" value="IF-2"/>
    <property type="match status" value="1"/>
</dbReference>
<dbReference type="NCBIfam" id="TIGR00231">
    <property type="entry name" value="small_GTP"/>
    <property type="match status" value="1"/>
</dbReference>
<dbReference type="PANTHER" id="PTHR43381:SF5">
    <property type="entry name" value="TR-TYPE G DOMAIN-CONTAINING PROTEIN"/>
    <property type="match status" value="1"/>
</dbReference>
<dbReference type="PANTHER" id="PTHR43381">
    <property type="entry name" value="TRANSLATION INITIATION FACTOR IF-2-RELATED"/>
    <property type="match status" value="1"/>
</dbReference>
<dbReference type="Pfam" id="PF22042">
    <property type="entry name" value="EF-G_D2"/>
    <property type="match status" value="1"/>
</dbReference>
<dbReference type="Pfam" id="PF00009">
    <property type="entry name" value="GTP_EFTU"/>
    <property type="match status" value="1"/>
</dbReference>
<dbReference type="Pfam" id="PF11987">
    <property type="entry name" value="IF-2"/>
    <property type="match status" value="1"/>
</dbReference>
<dbReference type="Pfam" id="PF04760">
    <property type="entry name" value="IF2_N"/>
    <property type="match status" value="2"/>
</dbReference>
<dbReference type="SUPFAM" id="SSF52156">
    <property type="entry name" value="Initiation factor IF2/eIF5b, domain 3"/>
    <property type="match status" value="1"/>
</dbReference>
<dbReference type="SUPFAM" id="SSF52540">
    <property type="entry name" value="P-loop containing nucleoside triphosphate hydrolases"/>
    <property type="match status" value="1"/>
</dbReference>
<dbReference type="SUPFAM" id="SSF50447">
    <property type="entry name" value="Translation proteins"/>
    <property type="match status" value="2"/>
</dbReference>
<dbReference type="PROSITE" id="PS51722">
    <property type="entry name" value="G_TR_2"/>
    <property type="match status" value="1"/>
</dbReference>
<dbReference type="PROSITE" id="PS01176">
    <property type="entry name" value="IF2"/>
    <property type="match status" value="1"/>
</dbReference>
<evidence type="ECO:0000250" key="1"/>
<evidence type="ECO:0000255" key="2">
    <source>
        <dbReference type="HAMAP-Rule" id="MF_00100"/>
    </source>
</evidence>
<evidence type="ECO:0000256" key="3">
    <source>
        <dbReference type="SAM" id="MobiDB-lite"/>
    </source>
</evidence>
<organism>
    <name type="scientific">Oceanobacillus iheyensis (strain DSM 14371 / CIP 107618 / JCM 11309 / KCTC 3954 / HTE831)</name>
    <dbReference type="NCBI Taxonomy" id="221109"/>
    <lineage>
        <taxon>Bacteria</taxon>
        <taxon>Bacillati</taxon>
        <taxon>Bacillota</taxon>
        <taxon>Bacilli</taxon>
        <taxon>Bacillales</taxon>
        <taxon>Bacillaceae</taxon>
        <taxon>Oceanobacillus</taxon>
    </lineage>
</organism>
<keyword id="KW-0963">Cytoplasm</keyword>
<keyword id="KW-0342">GTP-binding</keyword>
<keyword id="KW-0396">Initiation factor</keyword>
<keyword id="KW-0547">Nucleotide-binding</keyword>
<keyword id="KW-0648">Protein biosynthesis</keyword>
<keyword id="KW-1185">Reference proteome</keyword>
<sequence>MSKIRIYEYAKQNNLASKDVINFLKTENVEVSNHMSAISDEVVKKLDNKFKAKPENAKKGQNQKQSNNQQQNRQKQNQKNQSKPNKNKKQKGPKKNQQQERPAAKPAETPGKITYHGTLTVQDLAGKLNKEPAELIKKLMFLGVMATKNQDIDDDAIELICGEYDVEVEKEIILEDTDLDKYIEEDAEENLQERPAVVTIMGHVDHGKTTLLDSIRHTKVTAGEAGGITQHIGAYQVENDGKKITFLDTPGHAAFTSMRSRGAQVTDIAILVVAADDGVMPQTVEAINHAKAAEVPIIVAVNKMDKEGANPDRVMQELTEHQLIPEDWGGNTIFVNLSAIKNEGIDDLLEMILLVSEVEELKANPNAKAFGSVIDAQLDKGRGSVATLLVQNGTLHVGDPLVVGSTFGKVRAMVNDLGNRVTEVGPSTPVEITGLHGVPQAGDQFLVFKDEKKARQIGEAREQKQIDENRGTQSTVSLDDLFEQIKQGEMKELNIIVKADVQGSVEALAASLQKIEVEGVNVKIIHTGVGAITESDIILASASKAIVIGFNVRPDVNAKNAAESEKVDLRLHRVIYNAIEEIESAMKGLLDPEYQEKVIGQAEVREIFKVSRIGTIAGSYVTDGKITRDAGVRLIRDGVVLYEGELQALKRFKDDVKEVQTNYECGITISNFNDIKEGDTIEAFVMEEIERK</sequence>